<dbReference type="EMBL" id="EF380352">
    <property type="protein sequence ID" value="ABQ43307.1"/>
    <property type="molecule type" value="Genomic_DNA"/>
</dbReference>
<dbReference type="RefSeq" id="YP_001294146.1">
    <property type="nucleotide sequence ID" value="NC_009598.1"/>
</dbReference>
<dbReference type="SMR" id="A6MMH0"/>
<dbReference type="GeneID" id="5236473"/>
<dbReference type="GO" id="GO:0009507">
    <property type="term" value="C:chloroplast"/>
    <property type="evidence" value="ECO:0007669"/>
    <property type="project" value="UniProtKB-SubCell"/>
</dbReference>
<dbReference type="GO" id="GO:1990904">
    <property type="term" value="C:ribonucleoprotein complex"/>
    <property type="evidence" value="ECO:0007669"/>
    <property type="project" value="UniProtKB-KW"/>
</dbReference>
<dbReference type="GO" id="GO:0005840">
    <property type="term" value="C:ribosome"/>
    <property type="evidence" value="ECO:0007669"/>
    <property type="project" value="UniProtKB-KW"/>
</dbReference>
<dbReference type="GO" id="GO:0003735">
    <property type="term" value="F:structural constituent of ribosome"/>
    <property type="evidence" value="ECO:0007669"/>
    <property type="project" value="InterPro"/>
</dbReference>
<dbReference type="GO" id="GO:0006412">
    <property type="term" value="P:translation"/>
    <property type="evidence" value="ECO:0007669"/>
    <property type="project" value="UniProtKB-UniRule"/>
</dbReference>
<dbReference type="CDD" id="cd00353">
    <property type="entry name" value="Ribosomal_S15p_S13e"/>
    <property type="match status" value="1"/>
</dbReference>
<dbReference type="Gene3D" id="1.10.287.10">
    <property type="entry name" value="S15/NS1, RNA-binding"/>
    <property type="match status" value="1"/>
</dbReference>
<dbReference type="HAMAP" id="MF_01343_B">
    <property type="entry name" value="Ribosomal_uS15_B"/>
    <property type="match status" value="1"/>
</dbReference>
<dbReference type="InterPro" id="IPR000589">
    <property type="entry name" value="Ribosomal_uS15"/>
</dbReference>
<dbReference type="InterPro" id="IPR005290">
    <property type="entry name" value="Ribosomal_uS15_bac-type"/>
</dbReference>
<dbReference type="InterPro" id="IPR009068">
    <property type="entry name" value="uS15_NS1_RNA-bd_sf"/>
</dbReference>
<dbReference type="NCBIfam" id="TIGR00952">
    <property type="entry name" value="S15_bact"/>
    <property type="match status" value="1"/>
</dbReference>
<dbReference type="PANTHER" id="PTHR23321">
    <property type="entry name" value="RIBOSOMAL PROTEIN S15, BACTERIAL AND ORGANELLAR"/>
    <property type="match status" value="1"/>
</dbReference>
<dbReference type="PANTHER" id="PTHR23321:SF26">
    <property type="entry name" value="SMALL RIBOSOMAL SUBUNIT PROTEIN US15M"/>
    <property type="match status" value="1"/>
</dbReference>
<dbReference type="Pfam" id="PF00312">
    <property type="entry name" value="Ribosomal_S15"/>
    <property type="match status" value="1"/>
</dbReference>
<dbReference type="SMART" id="SM01387">
    <property type="entry name" value="Ribosomal_S15"/>
    <property type="match status" value="1"/>
</dbReference>
<dbReference type="SUPFAM" id="SSF47060">
    <property type="entry name" value="S15/NS1 RNA-binding domain"/>
    <property type="match status" value="1"/>
</dbReference>
<dbReference type="PROSITE" id="PS00362">
    <property type="entry name" value="RIBOSOMAL_S15"/>
    <property type="match status" value="1"/>
</dbReference>
<geneLocation type="chloroplast"/>
<comment type="subunit">
    <text evidence="1">Part of the 30S ribosomal subunit.</text>
</comment>
<comment type="subcellular location">
    <subcellularLocation>
        <location>Plastid</location>
        <location>Chloroplast</location>
    </subcellularLocation>
</comment>
<comment type="similarity">
    <text evidence="2">Belongs to the universal ribosomal protein uS15 family.</text>
</comment>
<keyword id="KW-0150">Chloroplast</keyword>
<keyword id="KW-0934">Plastid</keyword>
<keyword id="KW-0687">Ribonucleoprotein</keyword>
<keyword id="KW-0689">Ribosomal protein</keyword>
<reference key="1">
    <citation type="journal article" date="2007" name="Mol. Phylogenet. Evol.">
        <title>Phylogenetic and evolutionary implications of complete chloroplast genome sequences of four early-diverging angiosperms: Buxus (Buxaceae), Chloranthus (Chloranthaceae), Dioscorea (Dioscoreaceae), and Illicium (Schisandraceae).</title>
        <authorList>
            <person name="Hansen D.R."/>
            <person name="Dastidar S.G."/>
            <person name="Cai Z."/>
            <person name="Penaflor C."/>
            <person name="Kuehl J.V."/>
            <person name="Boore J.L."/>
            <person name="Jansen R.K."/>
        </authorList>
    </citation>
    <scope>NUCLEOTIDE SEQUENCE [LARGE SCALE GENOMIC DNA]</scope>
</reference>
<feature type="chain" id="PRO_0000354245" description="Small ribosomal subunit protein uS15c">
    <location>
        <begin position="1"/>
        <end position="89"/>
    </location>
</feature>
<sequence>MVKNSFNSVIPQEENKGSVEFQVFNFTNKIRRLTSHLELHRKDYLSQRGLRGILGKRQRLLAYLSKKNRVRYQELIGQLDIREPKTREF</sequence>
<gene>
    <name type="primary">rps15</name>
</gene>
<protein>
    <recommendedName>
        <fullName evidence="2">Small ribosomal subunit protein uS15c</fullName>
    </recommendedName>
    <alternativeName>
        <fullName>30S ribosomal protein S15, chloroplastic</fullName>
    </alternativeName>
</protein>
<proteinExistence type="inferred from homology"/>
<accession>A6MMH0</accession>
<name>RR15_CHLSC</name>
<organism>
    <name type="scientific">Chloranthus spicatus</name>
    <name type="common">Chulantree</name>
    <name type="synonym">Nigrina spicata</name>
    <dbReference type="NCBI Taxonomy" id="13006"/>
    <lineage>
        <taxon>Eukaryota</taxon>
        <taxon>Viridiplantae</taxon>
        <taxon>Streptophyta</taxon>
        <taxon>Embryophyta</taxon>
        <taxon>Tracheophyta</taxon>
        <taxon>Spermatophyta</taxon>
        <taxon>Magnoliopsida</taxon>
        <taxon>Chloranthales</taxon>
        <taxon>Chloranthaceae</taxon>
        <taxon>Chloranthus</taxon>
    </lineage>
</organism>
<evidence type="ECO:0000250" key="1"/>
<evidence type="ECO:0000305" key="2"/>